<organism>
    <name type="scientific">Brucella suis biovar 1 (strain 1330)</name>
    <dbReference type="NCBI Taxonomy" id="204722"/>
    <lineage>
        <taxon>Bacteria</taxon>
        <taxon>Pseudomonadati</taxon>
        <taxon>Pseudomonadota</taxon>
        <taxon>Alphaproteobacteria</taxon>
        <taxon>Hyphomicrobiales</taxon>
        <taxon>Brucellaceae</taxon>
        <taxon>Brucella/Ochrobactrum group</taxon>
        <taxon>Brucella</taxon>
    </lineage>
</organism>
<protein>
    <recommendedName>
        <fullName evidence="1">Cell division topological specificity factor</fullName>
    </recommendedName>
</protein>
<proteinExistence type="inferred from homology"/>
<accession>P65362</accession>
<accession>G0KC64</accession>
<accession>Q8FWX0</accession>
<accession>Q8YBH5</accession>
<name>MINE_BRUSU</name>
<gene>
    <name evidence="1" type="primary">minE</name>
    <name type="ordered locus">BRA0323</name>
    <name type="ordered locus">BS1330_II0320</name>
</gene>
<comment type="function">
    <text evidence="1">Prevents the cell division inhibition by proteins MinC and MinD at internal division sites while permitting inhibition at polar sites. This ensures cell division at the proper site by restricting the formation of a division septum at the midpoint of the long axis of the cell.</text>
</comment>
<comment type="similarity">
    <text evidence="1">Belongs to the MinE family.</text>
</comment>
<keyword id="KW-0131">Cell cycle</keyword>
<keyword id="KW-0132">Cell division</keyword>
<reference key="1">
    <citation type="journal article" date="2002" name="Proc. Natl. Acad. Sci. U.S.A.">
        <title>The Brucella suis genome reveals fundamental similarities between animal and plant pathogens and symbionts.</title>
        <authorList>
            <person name="Paulsen I.T."/>
            <person name="Seshadri R."/>
            <person name="Nelson K.E."/>
            <person name="Eisen J.A."/>
            <person name="Heidelberg J.F."/>
            <person name="Read T.D."/>
            <person name="Dodson R.J."/>
            <person name="Umayam L.A."/>
            <person name="Brinkac L.M."/>
            <person name="Beanan M.J."/>
            <person name="Daugherty S.C."/>
            <person name="DeBoy R.T."/>
            <person name="Durkin A.S."/>
            <person name="Kolonay J.F."/>
            <person name="Madupu R."/>
            <person name="Nelson W.C."/>
            <person name="Ayodeji B."/>
            <person name="Kraul M."/>
            <person name="Shetty J."/>
            <person name="Malek J.A."/>
            <person name="Van Aken S.E."/>
            <person name="Riedmuller S."/>
            <person name="Tettelin H."/>
            <person name="Gill S.R."/>
            <person name="White O."/>
            <person name="Salzberg S.L."/>
            <person name="Hoover D.L."/>
            <person name="Lindler L.E."/>
            <person name="Halling S.M."/>
            <person name="Boyle S.M."/>
            <person name="Fraser C.M."/>
        </authorList>
    </citation>
    <scope>NUCLEOTIDE SEQUENCE [LARGE SCALE GENOMIC DNA]</scope>
    <source>
        <strain>1330</strain>
    </source>
</reference>
<reference key="2">
    <citation type="journal article" date="2011" name="J. Bacteriol.">
        <title>Revised genome sequence of Brucella suis 1330.</title>
        <authorList>
            <person name="Tae H."/>
            <person name="Shallom S."/>
            <person name="Settlage R."/>
            <person name="Preston D."/>
            <person name="Adams L.G."/>
            <person name="Garner H.R."/>
        </authorList>
    </citation>
    <scope>NUCLEOTIDE SEQUENCE [LARGE SCALE GENOMIC DNA]</scope>
    <source>
        <strain>1330</strain>
    </source>
</reference>
<evidence type="ECO:0000255" key="1">
    <source>
        <dbReference type="HAMAP-Rule" id="MF_00262"/>
    </source>
</evidence>
<dbReference type="EMBL" id="AE014292">
    <property type="protein sequence ID" value="AAN33523.1"/>
    <property type="molecule type" value="Genomic_DNA"/>
</dbReference>
<dbReference type="EMBL" id="CP002998">
    <property type="protein sequence ID" value="AEM19802.1"/>
    <property type="molecule type" value="Genomic_DNA"/>
</dbReference>
<dbReference type="RefSeq" id="WP_002966267.1">
    <property type="nucleotide sequence ID" value="NZ_KN046805.1"/>
</dbReference>
<dbReference type="SMR" id="P65362"/>
<dbReference type="GeneID" id="97535514"/>
<dbReference type="KEGG" id="bms:BRA0323"/>
<dbReference type="KEGG" id="bsi:BS1330_II0320"/>
<dbReference type="PATRIC" id="fig|204722.21.peg.184"/>
<dbReference type="HOGENOM" id="CLU_137929_2_0_5"/>
<dbReference type="Proteomes" id="UP000007104">
    <property type="component" value="Chromosome II"/>
</dbReference>
<dbReference type="GO" id="GO:0051301">
    <property type="term" value="P:cell division"/>
    <property type="evidence" value="ECO:0007669"/>
    <property type="project" value="UniProtKB-KW"/>
</dbReference>
<dbReference type="GO" id="GO:0032955">
    <property type="term" value="P:regulation of division septum assembly"/>
    <property type="evidence" value="ECO:0007669"/>
    <property type="project" value="InterPro"/>
</dbReference>
<dbReference type="Gene3D" id="3.30.1070.10">
    <property type="entry name" value="Cell division topological specificity factor MinE"/>
    <property type="match status" value="1"/>
</dbReference>
<dbReference type="HAMAP" id="MF_00262">
    <property type="entry name" value="MinE"/>
    <property type="match status" value="1"/>
</dbReference>
<dbReference type="InterPro" id="IPR005527">
    <property type="entry name" value="MinE"/>
</dbReference>
<dbReference type="InterPro" id="IPR036707">
    <property type="entry name" value="MinE_sf"/>
</dbReference>
<dbReference type="NCBIfam" id="TIGR01215">
    <property type="entry name" value="minE"/>
    <property type="match status" value="1"/>
</dbReference>
<dbReference type="NCBIfam" id="NF001422">
    <property type="entry name" value="PRK00296.1"/>
    <property type="match status" value="1"/>
</dbReference>
<dbReference type="Pfam" id="PF03776">
    <property type="entry name" value="MinE"/>
    <property type="match status" value="1"/>
</dbReference>
<dbReference type="SUPFAM" id="SSF55229">
    <property type="entry name" value="Cell division protein MinE topological specificity domain"/>
    <property type="match status" value="1"/>
</dbReference>
<feature type="chain" id="PRO_0000205869" description="Cell division topological specificity factor">
    <location>
        <begin position="1"/>
        <end position="90"/>
    </location>
</feature>
<sequence length="90" mass="10089">MSIFRFFTRQQASAPQARERLQVLLAHERASYGGQSDLVAVLREEILAVIAKHIKVDREKVSVKMDRGDQVSTLEVDIELPLTAKKGRAA</sequence>